<evidence type="ECO:0000255" key="1">
    <source>
        <dbReference type="HAMAP-Rule" id="MF_01315"/>
    </source>
</evidence>
<evidence type="ECO:0000256" key="2">
    <source>
        <dbReference type="SAM" id="MobiDB-lite"/>
    </source>
</evidence>
<evidence type="ECO:0000305" key="3"/>
<keyword id="KW-0687">Ribonucleoprotein</keyword>
<keyword id="KW-0689">Ribosomal protein</keyword>
<keyword id="KW-0694">RNA-binding</keyword>
<keyword id="KW-0699">rRNA-binding</keyword>
<keyword id="KW-0820">tRNA-binding</keyword>
<accession>Q4A8J5</accession>
<dbReference type="EMBL" id="AE017244">
    <property type="protein sequence ID" value="AAZ53544.1"/>
    <property type="molecule type" value="Genomic_DNA"/>
</dbReference>
<dbReference type="RefSeq" id="WP_011206048.1">
    <property type="nucleotide sequence ID" value="NC_007332.1"/>
</dbReference>
<dbReference type="SMR" id="Q4A8J5"/>
<dbReference type="KEGG" id="mhp:MHP7448_0170"/>
<dbReference type="HOGENOM" id="CLU_103849_1_2_14"/>
<dbReference type="Proteomes" id="UP000000553">
    <property type="component" value="Chromosome"/>
</dbReference>
<dbReference type="GO" id="GO:0005829">
    <property type="term" value="C:cytosol"/>
    <property type="evidence" value="ECO:0007669"/>
    <property type="project" value="TreeGrafter"/>
</dbReference>
<dbReference type="GO" id="GO:0015935">
    <property type="term" value="C:small ribosomal subunit"/>
    <property type="evidence" value="ECO:0007669"/>
    <property type="project" value="TreeGrafter"/>
</dbReference>
<dbReference type="GO" id="GO:0019843">
    <property type="term" value="F:rRNA binding"/>
    <property type="evidence" value="ECO:0007669"/>
    <property type="project" value="UniProtKB-UniRule"/>
</dbReference>
<dbReference type="GO" id="GO:0003735">
    <property type="term" value="F:structural constituent of ribosome"/>
    <property type="evidence" value="ECO:0007669"/>
    <property type="project" value="InterPro"/>
</dbReference>
<dbReference type="GO" id="GO:0000049">
    <property type="term" value="F:tRNA binding"/>
    <property type="evidence" value="ECO:0007669"/>
    <property type="project" value="UniProtKB-UniRule"/>
</dbReference>
<dbReference type="GO" id="GO:0006412">
    <property type="term" value="P:translation"/>
    <property type="evidence" value="ECO:0007669"/>
    <property type="project" value="UniProtKB-UniRule"/>
</dbReference>
<dbReference type="FunFam" id="4.10.910.10:FF:000001">
    <property type="entry name" value="30S ribosomal protein S13"/>
    <property type="match status" value="1"/>
</dbReference>
<dbReference type="Gene3D" id="1.10.8.50">
    <property type="match status" value="1"/>
</dbReference>
<dbReference type="Gene3D" id="4.10.910.10">
    <property type="entry name" value="30s ribosomal protein s13, domain 2"/>
    <property type="match status" value="1"/>
</dbReference>
<dbReference type="HAMAP" id="MF_01315">
    <property type="entry name" value="Ribosomal_uS13"/>
    <property type="match status" value="1"/>
</dbReference>
<dbReference type="InterPro" id="IPR027437">
    <property type="entry name" value="Rbsml_uS13_C"/>
</dbReference>
<dbReference type="InterPro" id="IPR001892">
    <property type="entry name" value="Ribosomal_uS13"/>
</dbReference>
<dbReference type="InterPro" id="IPR010979">
    <property type="entry name" value="Ribosomal_uS13-like_H2TH"/>
</dbReference>
<dbReference type="InterPro" id="IPR018269">
    <property type="entry name" value="Ribosomal_uS13_CS"/>
</dbReference>
<dbReference type="PANTHER" id="PTHR10871">
    <property type="entry name" value="30S RIBOSOMAL PROTEIN S13/40S RIBOSOMAL PROTEIN S18"/>
    <property type="match status" value="1"/>
</dbReference>
<dbReference type="PANTHER" id="PTHR10871:SF1">
    <property type="entry name" value="SMALL RIBOSOMAL SUBUNIT PROTEIN US13M"/>
    <property type="match status" value="1"/>
</dbReference>
<dbReference type="Pfam" id="PF00416">
    <property type="entry name" value="Ribosomal_S13"/>
    <property type="match status" value="1"/>
</dbReference>
<dbReference type="PIRSF" id="PIRSF002134">
    <property type="entry name" value="Ribosomal_S13"/>
    <property type="match status" value="1"/>
</dbReference>
<dbReference type="SUPFAM" id="SSF46946">
    <property type="entry name" value="S13-like H2TH domain"/>
    <property type="match status" value="1"/>
</dbReference>
<dbReference type="PROSITE" id="PS00646">
    <property type="entry name" value="RIBOSOMAL_S13_1"/>
    <property type="match status" value="1"/>
</dbReference>
<dbReference type="PROSITE" id="PS50159">
    <property type="entry name" value="RIBOSOMAL_S13_2"/>
    <property type="match status" value="1"/>
</dbReference>
<organism>
    <name type="scientific">Mesomycoplasma hyopneumoniae (strain 7448)</name>
    <name type="common">Mycoplasma hyopneumoniae</name>
    <dbReference type="NCBI Taxonomy" id="262722"/>
    <lineage>
        <taxon>Bacteria</taxon>
        <taxon>Bacillati</taxon>
        <taxon>Mycoplasmatota</taxon>
        <taxon>Mycoplasmoidales</taxon>
        <taxon>Metamycoplasmataceae</taxon>
        <taxon>Mesomycoplasma</taxon>
    </lineage>
</organism>
<protein>
    <recommendedName>
        <fullName evidence="1">Small ribosomal subunit protein uS13</fullName>
    </recommendedName>
    <alternativeName>
        <fullName evidence="3">30S ribosomal protein S13</fullName>
    </alternativeName>
</protein>
<name>RS13_MESH7</name>
<gene>
    <name evidence="1" type="primary">rpsM</name>
    <name type="ordered locus">MHP7448_0170</name>
</gene>
<comment type="function">
    <text evidence="1">Located at the top of the head of the 30S subunit, it contacts several helices of the 16S rRNA. In the 70S ribosome it contacts the 23S rRNA (bridge B1a) and protein L5 of the 50S subunit (bridge B1b), connecting the 2 subunits; these bridges are implicated in subunit movement. Contacts the tRNAs in the A and P-sites.</text>
</comment>
<comment type="subunit">
    <text evidence="1">Part of the 30S ribosomal subunit. Forms a loose heterodimer with protein S19. Forms two bridges to the 50S subunit in the 70S ribosome.</text>
</comment>
<comment type="similarity">
    <text evidence="1">Belongs to the universal ribosomal protein uS13 family.</text>
</comment>
<feature type="chain" id="PRO_0000306656" description="Small ribosomal subunit protein uS13">
    <location>
        <begin position="1"/>
        <end position="137"/>
    </location>
</feature>
<feature type="region of interest" description="Disordered" evidence="2">
    <location>
        <begin position="114"/>
        <end position="137"/>
    </location>
</feature>
<feature type="compositionally biased region" description="Basic residues" evidence="2">
    <location>
        <begin position="119"/>
        <end position="130"/>
    </location>
</feature>
<reference key="1">
    <citation type="journal article" date="2005" name="J. Bacteriol.">
        <title>Swine and poultry pathogens: the complete genome sequences of two strains of Mycoplasma hyopneumoniae and a strain of Mycoplasma synoviae.</title>
        <authorList>
            <person name="Vasconcelos A.T.R."/>
            <person name="Ferreira H.B."/>
            <person name="Bizarro C.V."/>
            <person name="Bonatto S.L."/>
            <person name="Carvalho M.O."/>
            <person name="Pinto P.M."/>
            <person name="Almeida D.F."/>
            <person name="Almeida L.G.P."/>
            <person name="Almeida R."/>
            <person name="Alves-Junior L."/>
            <person name="Assuncao E.N."/>
            <person name="Azevedo V.A.C."/>
            <person name="Bogo M.R."/>
            <person name="Brigido M.M."/>
            <person name="Brocchi M."/>
            <person name="Burity H.A."/>
            <person name="Camargo A.A."/>
            <person name="Camargo S.S."/>
            <person name="Carepo M.S."/>
            <person name="Carraro D.M."/>
            <person name="de Mattos Cascardo J.C."/>
            <person name="Castro L.A."/>
            <person name="Cavalcanti G."/>
            <person name="Chemale G."/>
            <person name="Collevatti R.G."/>
            <person name="Cunha C.W."/>
            <person name="Dallagiovanna B."/>
            <person name="Dambros B.P."/>
            <person name="Dellagostin O.A."/>
            <person name="Falcao C."/>
            <person name="Fantinatti-Garboggini F."/>
            <person name="Felipe M.S.S."/>
            <person name="Fiorentin L."/>
            <person name="Franco G.R."/>
            <person name="Freitas N.S.A."/>
            <person name="Frias D."/>
            <person name="Grangeiro T.B."/>
            <person name="Grisard E.C."/>
            <person name="Guimaraes C.T."/>
            <person name="Hungria M."/>
            <person name="Jardim S.N."/>
            <person name="Krieger M.A."/>
            <person name="Laurino J.P."/>
            <person name="Lima L.F.A."/>
            <person name="Lopes M.I."/>
            <person name="Loreto E.L.S."/>
            <person name="Madeira H.M.F."/>
            <person name="Manfio G.P."/>
            <person name="Maranhao A.Q."/>
            <person name="Martinkovics C.T."/>
            <person name="Medeiros S.R.B."/>
            <person name="Moreira M.A.M."/>
            <person name="Neiva M."/>
            <person name="Ramalho-Neto C.E."/>
            <person name="Nicolas M.F."/>
            <person name="Oliveira S.C."/>
            <person name="Paixao R.F.C."/>
            <person name="Pedrosa F.O."/>
            <person name="Pena S.D.J."/>
            <person name="Pereira M."/>
            <person name="Pereira-Ferrari L."/>
            <person name="Piffer I."/>
            <person name="Pinto L.S."/>
            <person name="Potrich D.P."/>
            <person name="Salim A.C.M."/>
            <person name="Santos F.R."/>
            <person name="Schmitt R."/>
            <person name="Schneider M.P.C."/>
            <person name="Schrank A."/>
            <person name="Schrank I.S."/>
            <person name="Schuck A.F."/>
            <person name="Seuanez H.N."/>
            <person name="Silva D.W."/>
            <person name="Silva R."/>
            <person name="Silva S.C."/>
            <person name="Soares C.M.A."/>
            <person name="Souza K.R.L."/>
            <person name="Souza R.C."/>
            <person name="Staats C.C."/>
            <person name="Steffens M.B.R."/>
            <person name="Teixeira S.M.R."/>
            <person name="Urmenyi T.P."/>
            <person name="Vainstein M.H."/>
            <person name="Zuccherato L.W."/>
            <person name="Simpson A.J.G."/>
            <person name="Zaha A."/>
        </authorList>
    </citation>
    <scope>NUCLEOTIDE SEQUENCE [LARGE SCALE GENOMIC DNA]</scope>
    <source>
        <strain>7448</strain>
    </source>
</reference>
<sequence length="137" mass="15716">MARVLNVEIPNHKRIVIALCSIFGIGKSLATEIVEKTAKLQEEKFGKKFPILTENTKVKEINEEVLQVIRDVAKTYKTEGDLHREVQSNIKRLIEIKCYRGIRHRKGLPVRGQVTQKNARTRKGPRKTIMAKKDKGK</sequence>
<proteinExistence type="inferred from homology"/>